<reference key="1">
    <citation type="journal article" date="2008" name="J. Bacteriol.">
        <title>The genome sequence of the tomato-pathogenic actinomycete Clavibacter michiganensis subsp. michiganensis NCPPB382 reveals a large island involved in pathogenicity.</title>
        <authorList>
            <person name="Gartemann K.-H."/>
            <person name="Abt B."/>
            <person name="Bekel T."/>
            <person name="Burger A."/>
            <person name="Engemann J."/>
            <person name="Fluegel M."/>
            <person name="Gaigalat L."/>
            <person name="Goesmann A."/>
            <person name="Graefen I."/>
            <person name="Kalinowski J."/>
            <person name="Kaup O."/>
            <person name="Kirchner O."/>
            <person name="Krause L."/>
            <person name="Linke B."/>
            <person name="McHardy A."/>
            <person name="Meyer F."/>
            <person name="Pohle S."/>
            <person name="Rueckert C."/>
            <person name="Schneiker S."/>
            <person name="Zellermann E.-M."/>
            <person name="Puehler A."/>
            <person name="Eichenlaub R."/>
            <person name="Kaiser O."/>
            <person name="Bartels D."/>
        </authorList>
    </citation>
    <scope>NUCLEOTIDE SEQUENCE [LARGE SCALE GENOMIC DNA]</scope>
    <source>
        <strain>NCPPB 382</strain>
    </source>
</reference>
<organism>
    <name type="scientific">Clavibacter michiganensis subsp. michiganensis (strain NCPPB 382)</name>
    <dbReference type="NCBI Taxonomy" id="443906"/>
    <lineage>
        <taxon>Bacteria</taxon>
        <taxon>Bacillati</taxon>
        <taxon>Actinomycetota</taxon>
        <taxon>Actinomycetes</taxon>
        <taxon>Micrococcales</taxon>
        <taxon>Microbacteriaceae</taxon>
        <taxon>Clavibacter</taxon>
    </lineage>
</organism>
<accession>A5CS46</accession>
<name>SEPF_CLAM3</name>
<feature type="chain" id="PRO_0000333991" description="Cell division protein SepF">
    <location>
        <begin position="1"/>
        <end position="164"/>
    </location>
</feature>
<feature type="region of interest" description="Disordered" evidence="2">
    <location>
        <begin position="21"/>
        <end position="71"/>
    </location>
</feature>
<feature type="compositionally biased region" description="Low complexity" evidence="2">
    <location>
        <begin position="22"/>
        <end position="54"/>
    </location>
</feature>
<protein>
    <recommendedName>
        <fullName evidence="1">Cell division protein SepF</fullName>
    </recommendedName>
</protein>
<proteinExistence type="inferred from homology"/>
<gene>
    <name evidence="1" type="primary">sepF</name>
    <name type="ordered locus">CMM_1854</name>
</gene>
<evidence type="ECO:0000255" key="1">
    <source>
        <dbReference type="HAMAP-Rule" id="MF_01197"/>
    </source>
</evidence>
<evidence type="ECO:0000256" key="2">
    <source>
        <dbReference type="SAM" id="MobiDB-lite"/>
    </source>
</evidence>
<keyword id="KW-0131">Cell cycle</keyword>
<keyword id="KW-0132">Cell division</keyword>
<keyword id="KW-0963">Cytoplasm</keyword>
<keyword id="KW-0717">Septation</keyword>
<dbReference type="EMBL" id="AM711867">
    <property type="protein sequence ID" value="CAN01910.1"/>
    <property type="molecule type" value="Genomic_DNA"/>
</dbReference>
<dbReference type="RefSeq" id="WP_012038541.1">
    <property type="nucleotide sequence ID" value="NC_009480.1"/>
</dbReference>
<dbReference type="SMR" id="A5CS46"/>
<dbReference type="KEGG" id="cmi:CMM_1854"/>
<dbReference type="eggNOG" id="COG1799">
    <property type="taxonomic scope" value="Bacteria"/>
</dbReference>
<dbReference type="HOGENOM" id="CLU_078499_0_2_11"/>
<dbReference type="OrthoDB" id="3731101at2"/>
<dbReference type="Proteomes" id="UP000001564">
    <property type="component" value="Chromosome"/>
</dbReference>
<dbReference type="GO" id="GO:0005737">
    <property type="term" value="C:cytoplasm"/>
    <property type="evidence" value="ECO:0007669"/>
    <property type="project" value="UniProtKB-SubCell"/>
</dbReference>
<dbReference type="GO" id="GO:0000917">
    <property type="term" value="P:division septum assembly"/>
    <property type="evidence" value="ECO:0007669"/>
    <property type="project" value="UniProtKB-KW"/>
</dbReference>
<dbReference type="GO" id="GO:0043093">
    <property type="term" value="P:FtsZ-dependent cytokinesis"/>
    <property type="evidence" value="ECO:0007669"/>
    <property type="project" value="UniProtKB-UniRule"/>
</dbReference>
<dbReference type="Gene3D" id="3.30.110.150">
    <property type="entry name" value="SepF-like protein"/>
    <property type="match status" value="1"/>
</dbReference>
<dbReference type="HAMAP" id="MF_01197">
    <property type="entry name" value="SepF"/>
    <property type="match status" value="1"/>
</dbReference>
<dbReference type="InterPro" id="IPR023052">
    <property type="entry name" value="Cell_div_SepF"/>
</dbReference>
<dbReference type="InterPro" id="IPR007561">
    <property type="entry name" value="Cell_div_SepF/SepF-rel"/>
</dbReference>
<dbReference type="InterPro" id="IPR038594">
    <property type="entry name" value="SepF-like_sf"/>
</dbReference>
<dbReference type="PANTHER" id="PTHR35798">
    <property type="entry name" value="CELL DIVISION PROTEIN SEPF"/>
    <property type="match status" value="1"/>
</dbReference>
<dbReference type="PANTHER" id="PTHR35798:SF1">
    <property type="entry name" value="CELL DIVISION PROTEIN SEPF"/>
    <property type="match status" value="1"/>
</dbReference>
<dbReference type="Pfam" id="PF04472">
    <property type="entry name" value="SepF"/>
    <property type="match status" value="1"/>
</dbReference>
<comment type="function">
    <text evidence="1">Cell division protein that is part of the divisome complex and is recruited early to the Z-ring. Probably stimulates Z-ring formation, perhaps through the cross-linking of FtsZ protofilaments. Its function overlaps with FtsA.</text>
</comment>
<comment type="subunit">
    <text evidence="1">Homodimer. Interacts with FtsZ.</text>
</comment>
<comment type="subcellular location">
    <subcellularLocation>
        <location evidence="1">Cytoplasm</location>
    </subcellularLocation>
    <text evidence="1">Localizes to the division site, in a FtsZ-dependent manner.</text>
</comment>
<comment type="similarity">
    <text evidence="1">Belongs to the SepF family.</text>
</comment>
<sequence length="164" mass="17837">MANPLRKTMVYLGLADEELDYQQGQQPAQQQQSPVQAVPTPAPAPQQQAKRAPVTPLHKPSTTTRNAAPAEMNEILTVHPKAYKDAQVIAENFREGVPVIINLSQMTDDDARRLIDFASGLSIGLYGKIERVTAKVFLLSPSHVAVSGEQSATEAEVEASFFGR</sequence>